<reference key="1">
    <citation type="submission" date="2007-03" db="EMBL/GenBank/DDBJ databases">
        <authorList>
            <consortium name="NIH - Xenopus Gene Collection (XGC) project"/>
        </authorList>
    </citation>
    <scope>NUCLEOTIDE SEQUENCE [LARGE SCALE MRNA]</scope>
    <source>
        <tissue>Embryo</tissue>
    </source>
</reference>
<protein>
    <recommendedName>
        <fullName>N-lysine methyltransferase setd6</fullName>
        <ecNumber>2.1.1.-</ecNumber>
    </recommendedName>
    <alternativeName>
        <fullName>SET domain-containing protein 6</fullName>
    </alternativeName>
</protein>
<evidence type="ECO:0000250" key="1">
    <source>
        <dbReference type="UniProtKB" id="Q8TBK2"/>
    </source>
</evidence>
<evidence type="ECO:0000255" key="2">
    <source>
        <dbReference type="PROSITE-ProRule" id="PRU00190"/>
    </source>
</evidence>
<keyword id="KW-0489">Methyltransferase</keyword>
<keyword id="KW-0539">Nucleus</keyword>
<keyword id="KW-1185">Reference proteome</keyword>
<keyword id="KW-0949">S-adenosyl-L-methionine</keyword>
<keyword id="KW-0808">Transferase</keyword>
<sequence length="454" mass="52331">MGPDAKKQKLQSEDHLQNDLPVSCFLAWCKKVGLELNPKVYISTEGTVSQYGMLAREDLSDGELLFSIPRSAILSQNTTRIRDLIEKEQDSLQSCSGWVPLLISLLYEATDSSSHWAPYFGLWPELDPPDMPMFWSEEEQTKLLQGTGILEAVHKDLKNIEKEYNSIVLPFIRRNPEKFCPMKHTLDLYKRLVAFVMAYSFQEPQEEDEEEDIEKDILPPMMVPVADLLNHVAQHNAHLEFTPECLRMITTKSVCAGQELFNTYGQMANWQLLHMYGFAEPHPQNCNETADIQMVTVREAAFQVARTEEDRLEMQKRWDFLCHIEIVGEEGAFVFGLEEVMTEEELKACLKVLCMSTDEFAEYKENDGWEEDEDNDEQTLLTQEISRLPIPWRKLLHLSAELTLKAYKTELSMDEALVNDPTAYAKLSSREQHSLQVQYGQKKILHLLLELTKS</sequence>
<proteinExistence type="evidence at transcript level"/>
<name>SETD6_XENTR</name>
<accession>A4QNG5</accession>
<dbReference type="EC" id="2.1.1.-"/>
<dbReference type="EMBL" id="BC135640">
    <property type="protein sequence ID" value="AAI35641.1"/>
    <property type="molecule type" value="mRNA"/>
</dbReference>
<dbReference type="RefSeq" id="NP_001096520.1">
    <property type="nucleotide sequence ID" value="NM_001103050.1"/>
</dbReference>
<dbReference type="SMR" id="A4QNG5"/>
<dbReference type="FunCoup" id="A4QNG5">
    <property type="interactions" value="2063"/>
</dbReference>
<dbReference type="STRING" id="8364.ENSXETP00000010631"/>
<dbReference type="PaxDb" id="8364-ENSXETP00000030207"/>
<dbReference type="DNASU" id="100125156"/>
<dbReference type="GeneID" id="100125156"/>
<dbReference type="KEGG" id="xtr:100125156"/>
<dbReference type="AGR" id="Xenbase:XB-GENE-998235"/>
<dbReference type="CTD" id="79918"/>
<dbReference type="Xenbase" id="XB-GENE-998235">
    <property type="gene designation" value="setd6"/>
</dbReference>
<dbReference type="eggNOG" id="KOG1338">
    <property type="taxonomic scope" value="Eukaryota"/>
</dbReference>
<dbReference type="HOGENOM" id="CLU_017135_2_0_1"/>
<dbReference type="InParanoid" id="A4QNG5"/>
<dbReference type="OMA" id="RVDWWLE"/>
<dbReference type="OrthoDB" id="341421at2759"/>
<dbReference type="PhylomeDB" id="A4QNG5"/>
<dbReference type="TreeFam" id="TF106399"/>
<dbReference type="Proteomes" id="UP000008143">
    <property type="component" value="Chromosome 4"/>
</dbReference>
<dbReference type="GO" id="GO:0005634">
    <property type="term" value="C:nucleus"/>
    <property type="evidence" value="ECO:0000250"/>
    <property type="project" value="UniProtKB"/>
</dbReference>
<dbReference type="GO" id="GO:0016279">
    <property type="term" value="F:protein-lysine N-methyltransferase activity"/>
    <property type="evidence" value="ECO:0000250"/>
    <property type="project" value="UniProtKB"/>
</dbReference>
<dbReference type="GO" id="GO:0032088">
    <property type="term" value="P:negative regulation of NF-kappaB transcription factor activity"/>
    <property type="evidence" value="ECO:0000250"/>
    <property type="project" value="UniProtKB"/>
</dbReference>
<dbReference type="GO" id="GO:0018026">
    <property type="term" value="P:peptidyl-lysine monomethylation"/>
    <property type="evidence" value="ECO:0000250"/>
    <property type="project" value="UniProtKB"/>
</dbReference>
<dbReference type="GO" id="GO:0050727">
    <property type="term" value="P:regulation of inflammatory response"/>
    <property type="evidence" value="ECO:0000250"/>
    <property type="project" value="UniProtKB"/>
</dbReference>
<dbReference type="CDD" id="cd19178">
    <property type="entry name" value="SET_SETD6"/>
    <property type="match status" value="1"/>
</dbReference>
<dbReference type="FunFam" id="3.90.1410.10:FF:000013">
    <property type="entry name" value="N-lysine methyltransferase SETD6"/>
    <property type="match status" value="1"/>
</dbReference>
<dbReference type="FunFam" id="3.90.1420.10:FF:000002">
    <property type="entry name" value="N-lysine methyltransferase SETD6"/>
    <property type="match status" value="1"/>
</dbReference>
<dbReference type="Gene3D" id="3.90.1420.10">
    <property type="entry name" value="Rubisco LSMT, substrate-binding domain"/>
    <property type="match status" value="1"/>
</dbReference>
<dbReference type="Gene3D" id="3.90.1410.10">
    <property type="entry name" value="set domain protein methyltransferase, domain 1"/>
    <property type="match status" value="1"/>
</dbReference>
<dbReference type="InterPro" id="IPR011383">
    <property type="entry name" value="N-lys_methylase_SETD6"/>
</dbReference>
<dbReference type="InterPro" id="IPR015353">
    <property type="entry name" value="Rubisco_LSMT_subst-bd"/>
</dbReference>
<dbReference type="InterPro" id="IPR036464">
    <property type="entry name" value="Rubisco_LSMT_subst-bd_sf"/>
</dbReference>
<dbReference type="InterPro" id="IPR001214">
    <property type="entry name" value="SET_dom"/>
</dbReference>
<dbReference type="InterPro" id="IPR046341">
    <property type="entry name" value="SET_dom_sf"/>
</dbReference>
<dbReference type="InterPro" id="IPR050600">
    <property type="entry name" value="SETD3_SETD6_MTase"/>
</dbReference>
<dbReference type="InterPro" id="IPR044430">
    <property type="entry name" value="SETD6_SET"/>
</dbReference>
<dbReference type="PANTHER" id="PTHR13271:SF34">
    <property type="entry name" value="N-LYSINE METHYLTRANSFERASE SETD6"/>
    <property type="match status" value="1"/>
</dbReference>
<dbReference type="PANTHER" id="PTHR13271">
    <property type="entry name" value="UNCHARACTERIZED PUTATIVE METHYLTRANSFERASE"/>
    <property type="match status" value="1"/>
</dbReference>
<dbReference type="Pfam" id="PF09273">
    <property type="entry name" value="Rubis-subs-bind"/>
    <property type="match status" value="1"/>
</dbReference>
<dbReference type="Pfam" id="PF00856">
    <property type="entry name" value="SET"/>
    <property type="match status" value="1"/>
</dbReference>
<dbReference type="PIRSF" id="PIRSF011771">
    <property type="entry name" value="RMS1_SET"/>
    <property type="match status" value="1"/>
</dbReference>
<dbReference type="SUPFAM" id="SSF81822">
    <property type="entry name" value="RuBisCo LSMT C-terminal, substrate-binding domain"/>
    <property type="match status" value="1"/>
</dbReference>
<dbReference type="SUPFAM" id="SSF82199">
    <property type="entry name" value="SET domain"/>
    <property type="match status" value="1"/>
</dbReference>
<dbReference type="PROSITE" id="PS50280">
    <property type="entry name" value="SET"/>
    <property type="match status" value="1"/>
</dbReference>
<organism>
    <name type="scientific">Xenopus tropicalis</name>
    <name type="common">Western clawed frog</name>
    <name type="synonym">Silurana tropicalis</name>
    <dbReference type="NCBI Taxonomy" id="8364"/>
    <lineage>
        <taxon>Eukaryota</taxon>
        <taxon>Metazoa</taxon>
        <taxon>Chordata</taxon>
        <taxon>Craniata</taxon>
        <taxon>Vertebrata</taxon>
        <taxon>Euteleostomi</taxon>
        <taxon>Amphibia</taxon>
        <taxon>Batrachia</taxon>
        <taxon>Anura</taxon>
        <taxon>Pipoidea</taxon>
        <taxon>Pipidae</taxon>
        <taxon>Xenopodinae</taxon>
        <taxon>Xenopus</taxon>
        <taxon>Silurana</taxon>
    </lineage>
</organism>
<feature type="chain" id="PRO_0000405843" description="N-lysine methyltransferase setd6">
    <location>
        <begin position="1"/>
        <end position="454"/>
    </location>
</feature>
<feature type="domain" description="SET" evidence="2">
    <location>
        <begin position="38"/>
        <end position="265"/>
    </location>
</feature>
<gene>
    <name type="primary">setd6</name>
</gene>
<comment type="function">
    <text evidence="1">Protein-lysine N-methyltransferase.</text>
</comment>
<comment type="subcellular location">
    <subcellularLocation>
        <location evidence="1">Nucleus</location>
    </subcellularLocation>
</comment>
<comment type="similarity">
    <text evidence="2">Belongs to the class V-like SAM-binding methyltransferase superfamily. Histone-lysine methyltransferase family. SETD6 subfamily.</text>
</comment>